<name>RISB_LEUMM</name>
<gene>
    <name evidence="1" type="primary">ribH</name>
    <name type="ordered locus">LEUM_0825</name>
</gene>
<sequence length="156" mass="16846">MIYKAKLIDQTNKKIAIVASKFNDLIVKQLISGAQESLEMHGIDESNIDIIWVPGALEIPMVAKRIAQVQKYDGIVTLGAVIKGDTDHYDLVINGVANGISQISLSTDVPIVFGVLTTDTLEQAQQRSGAKSGNKGAEVALSLLELINIFEQIKSI</sequence>
<feature type="chain" id="PRO_1000040442" description="6,7-dimethyl-8-ribityllumazine synthase">
    <location>
        <begin position="1"/>
        <end position="156"/>
    </location>
</feature>
<feature type="active site" description="Proton donor" evidence="1">
    <location>
        <position position="88"/>
    </location>
</feature>
<feature type="binding site" evidence="1">
    <location>
        <position position="22"/>
    </location>
    <ligand>
        <name>5-amino-6-(D-ribitylamino)uracil</name>
        <dbReference type="ChEBI" id="CHEBI:15934"/>
    </ligand>
</feature>
<feature type="binding site" evidence="1">
    <location>
        <begin position="56"/>
        <end position="58"/>
    </location>
    <ligand>
        <name>5-amino-6-(D-ribitylamino)uracil</name>
        <dbReference type="ChEBI" id="CHEBI:15934"/>
    </ligand>
</feature>
<feature type="binding site" evidence="1">
    <location>
        <begin position="80"/>
        <end position="82"/>
    </location>
    <ligand>
        <name>5-amino-6-(D-ribitylamino)uracil</name>
        <dbReference type="ChEBI" id="CHEBI:15934"/>
    </ligand>
</feature>
<feature type="binding site" evidence="1">
    <location>
        <begin position="85"/>
        <end position="86"/>
    </location>
    <ligand>
        <name>(2S)-2-hydroxy-3-oxobutyl phosphate</name>
        <dbReference type="ChEBI" id="CHEBI:58830"/>
    </ligand>
</feature>
<feature type="binding site" evidence="1">
    <location>
        <position position="113"/>
    </location>
    <ligand>
        <name>5-amino-6-(D-ribitylamino)uracil</name>
        <dbReference type="ChEBI" id="CHEBI:15934"/>
    </ligand>
</feature>
<feature type="binding site" evidence="1">
    <location>
        <position position="127"/>
    </location>
    <ligand>
        <name>(2S)-2-hydroxy-3-oxobutyl phosphate</name>
        <dbReference type="ChEBI" id="CHEBI:58830"/>
    </ligand>
</feature>
<dbReference type="EC" id="2.5.1.78" evidence="1"/>
<dbReference type="EMBL" id="CP000414">
    <property type="protein sequence ID" value="ABJ61933.1"/>
    <property type="molecule type" value="Genomic_DNA"/>
</dbReference>
<dbReference type="RefSeq" id="WP_011679599.1">
    <property type="nucleotide sequence ID" value="NC_008531.1"/>
</dbReference>
<dbReference type="SMR" id="Q03XY9"/>
<dbReference type="EnsemblBacteria" id="ABJ61933">
    <property type="protein sequence ID" value="ABJ61933"/>
    <property type="gene ID" value="LEUM_0825"/>
</dbReference>
<dbReference type="GeneID" id="29577036"/>
<dbReference type="KEGG" id="lme:LEUM_0825"/>
<dbReference type="eggNOG" id="COG0054">
    <property type="taxonomic scope" value="Bacteria"/>
</dbReference>
<dbReference type="HOGENOM" id="CLU_089358_1_1_9"/>
<dbReference type="UniPathway" id="UPA00275">
    <property type="reaction ID" value="UER00404"/>
</dbReference>
<dbReference type="Proteomes" id="UP000000362">
    <property type="component" value="Chromosome"/>
</dbReference>
<dbReference type="GO" id="GO:0005829">
    <property type="term" value="C:cytosol"/>
    <property type="evidence" value="ECO:0007669"/>
    <property type="project" value="TreeGrafter"/>
</dbReference>
<dbReference type="GO" id="GO:0009349">
    <property type="term" value="C:riboflavin synthase complex"/>
    <property type="evidence" value="ECO:0007669"/>
    <property type="project" value="InterPro"/>
</dbReference>
<dbReference type="GO" id="GO:0000906">
    <property type="term" value="F:6,7-dimethyl-8-ribityllumazine synthase activity"/>
    <property type="evidence" value="ECO:0007669"/>
    <property type="project" value="UniProtKB-UniRule"/>
</dbReference>
<dbReference type="GO" id="GO:0009231">
    <property type="term" value="P:riboflavin biosynthetic process"/>
    <property type="evidence" value="ECO:0007669"/>
    <property type="project" value="UniProtKB-UniRule"/>
</dbReference>
<dbReference type="CDD" id="cd09209">
    <property type="entry name" value="Lumazine_synthase-I"/>
    <property type="match status" value="1"/>
</dbReference>
<dbReference type="FunFam" id="3.40.50.960:FF:000001">
    <property type="entry name" value="6,7-dimethyl-8-ribityllumazine synthase"/>
    <property type="match status" value="1"/>
</dbReference>
<dbReference type="Gene3D" id="3.40.50.960">
    <property type="entry name" value="Lumazine/riboflavin synthase"/>
    <property type="match status" value="1"/>
</dbReference>
<dbReference type="HAMAP" id="MF_00178">
    <property type="entry name" value="Lumazine_synth"/>
    <property type="match status" value="1"/>
</dbReference>
<dbReference type="InterPro" id="IPR034964">
    <property type="entry name" value="LS"/>
</dbReference>
<dbReference type="InterPro" id="IPR002180">
    <property type="entry name" value="LS/RS"/>
</dbReference>
<dbReference type="InterPro" id="IPR036467">
    <property type="entry name" value="LS/RS_sf"/>
</dbReference>
<dbReference type="NCBIfam" id="TIGR00114">
    <property type="entry name" value="lumazine-synth"/>
    <property type="match status" value="1"/>
</dbReference>
<dbReference type="PANTHER" id="PTHR21058:SF0">
    <property type="entry name" value="6,7-DIMETHYL-8-RIBITYLLUMAZINE SYNTHASE"/>
    <property type="match status" value="1"/>
</dbReference>
<dbReference type="PANTHER" id="PTHR21058">
    <property type="entry name" value="6,7-DIMETHYL-8-RIBITYLLUMAZINE SYNTHASE DMRL SYNTHASE LUMAZINE SYNTHASE"/>
    <property type="match status" value="1"/>
</dbReference>
<dbReference type="Pfam" id="PF00885">
    <property type="entry name" value="DMRL_synthase"/>
    <property type="match status" value="1"/>
</dbReference>
<dbReference type="SUPFAM" id="SSF52121">
    <property type="entry name" value="Lumazine synthase"/>
    <property type="match status" value="1"/>
</dbReference>
<comment type="function">
    <text evidence="1">Catalyzes the formation of 6,7-dimethyl-8-ribityllumazine by condensation of 5-amino-6-(D-ribitylamino)uracil with 3,4-dihydroxy-2-butanone 4-phosphate. This is the penultimate step in the biosynthesis of riboflavin.</text>
</comment>
<comment type="catalytic activity">
    <reaction evidence="1">
        <text>(2S)-2-hydroxy-3-oxobutyl phosphate + 5-amino-6-(D-ribitylamino)uracil = 6,7-dimethyl-8-(1-D-ribityl)lumazine + phosphate + 2 H2O + H(+)</text>
        <dbReference type="Rhea" id="RHEA:26152"/>
        <dbReference type="ChEBI" id="CHEBI:15377"/>
        <dbReference type="ChEBI" id="CHEBI:15378"/>
        <dbReference type="ChEBI" id="CHEBI:15934"/>
        <dbReference type="ChEBI" id="CHEBI:43474"/>
        <dbReference type="ChEBI" id="CHEBI:58201"/>
        <dbReference type="ChEBI" id="CHEBI:58830"/>
        <dbReference type="EC" id="2.5.1.78"/>
    </reaction>
</comment>
<comment type="pathway">
    <text evidence="1">Cofactor biosynthesis; riboflavin biosynthesis; riboflavin from 2-hydroxy-3-oxobutyl phosphate and 5-amino-6-(D-ribitylamino)uracil: step 1/2.</text>
</comment>
<comment type="similarity">
    <text evidence="1">Belongs to the DMRL synthase family.</text>
</comment>
<evidence type="ECO:0000255" key="1">
    <source>
        <dbReference type="HAMAP-Rule" id="MF_00178"/>
    </source>
</evidence>
<protein>
    <recommendedName>
        <fullName evidence="1">6,7-dimethyl-8-ribityllumazine synthase</fullName>
        <shortName evidence="1">DMRL synthase</shortName>
        <shortName evidence="1">LS</shortName>
        <shortName evidence="1">Lumazine synthase</shortName>
        <ecNumber evidence="1">2.5.1.78</ecNumber>
    </recommendedName>
</protein>
<organism>
    <name type="scientific">Leuconostoc mesenteroides subsp. mesenteroides (strain ATCC 8293 / DSM 20343 / BCRC 11652 / CCM 1803 / JCM 6124 / NCDO 523 / NBRC 100496 / NCIMB 8023 / NCTC 12954 / NRRL B-1118 / 37Y)</name>
    <dbReference type="NCBI Taxonomy" id="203120"/>
    <lineage>
        <taxon>Bacteria</taxon>
        <taxon>Bacillati</taxon>
        <taxon>Bacillota</taxon>
        <taxon>Bacilli</taxon>
        <taxon>Lactobacillales</taxon>
        <taxon>Lactobacillaceae</taxon>
        <taxon>Leuconostoc</taxon>
    </lineage>
</organism>
<accession>Q03XY9</accession>
<reference key="1">
    <citation type="journal article" date="2006" name="Proc. Natl. Acad. Sci. U.S.A.">
        <title>Comparative genomics of the lactic acid bacteria.</title>
        <authorList>
            <person name="Makarova K.S."/>
            <person name="Slesarev A."/>
            <person name="Wolf Y.I."/>
            <person name="Sorokin A."/>
            <person name="Mirkin B."/>
            <person name="Koonin E.V."/>
            <person name="Pavlov A."/>
            <person name="Pavlova N."/>
            <person name="Karamychev V."/>
            <person name="Polouchine N."/>
            <person name="Shakhova V."/>
            <person name="Grigoriev I."/>
            <person name="Lou Y."/>
            <person name="Rohksar D."/>
            <person name="Lucas S."/>
            <person name="Huang K."/>
            <person name="Goodstein D.M."/>
            <person name="Hawkins T."/>
            <person name="Plengvidhya V."/>
            <person name="Welker D."/>
            <person name="Hughes J."/>
            <person name="Goh Y."/>
            <person name="Benson A."/>
            <person name="Baldwin K."/>
            <person name="Lee J.-H."/>
            <person name="Diaz-Muniz I."/>
            <person name="Dosti B."/>
            <person name="Smeianov V."/>
            <person name="Wechter W."/>
            <person name="Barabote R."/>
            <person name="Lorca G."/>
            <person name="Altermann E."/>
            <person name="Barrangou R."/>
            <person name="Ganesan B."/>
            <person name="Xie Y."/>
            <person name="Rawsthorne H."/>
            <person name="Tamir D."/>
            <person name="Parker C."/>
            <person name="Breidt F."/>
            <person name="Broadbent J.R."/>
            <person name="Hutkins R."/>
            <person name="O'Sullivan D."/>
            <person name="Steele J."/>
            <person name="Unlu G."/>
            <person name="Saier M.H. Jr."/>
            <person name="Klaenhammer T."/>
            <person name="Richardson P."/>
            <person name="Kozyavkin S."/>
            <person name="Weimer B.C."/>
            <person name="Mills D.A."/>
        </authorList>
    </citation>
    <scope>NUCLEOTIDE SEQUENCE [LARGE SCALE GENOMIC DNA]</scope>
    <source>
        <strain>ATCC 8293 / DSM 20343 / BCRC 11652 / CCM 1803 / JCM 6124 / NCDO 523 / NBRC 100496 / NCIMB 8023 / NCTC 12954 / NRRL B-1118 / 37Y</strain>
    </source>
</reference>
<proteinExistence type="inferred from homology"/>
<keyword id="KW-1185">Reference proteome</keyword>
<keyword id="KW-0686">Riboflavin biosynthesis</keyword>
<keyword id="KW-0808">Transferase</keyword>